<feature type="chain" id="PRO_0000321832" description="Transmembrane protein 223">
    <location>
        <begin position="1"/>
        <end position="202"/>
    </location>
</feature>
<feature type="topological domain" description="Mitochondrial matrix" evidence="1">
    <location>
        <begin position="1"/>
        <end position="43"/>
    </location>
</feature>
<feature type="transmembrane region" description="Helical" evidence="2">
    <location>
        <begin position="44"/>
        <end position="64"/>
    </location>
</feature>
<feature type="topological domain" description="Mitochondrial intermembrane" evidence="1">
    <location>
        <begin position="65"/>
        <end position="97"/>
    </location>
</feature>
<feature type="transmembrane region" description="Helical" evidence="2">
    <location>
        <begin position="98"/>
        <end position="118"/>
    </location>
</feature>
<feature type="topological domain" description="Mitochondrial matrix" evidence="1">
    <location>
        <begin position="119"/>
        <end position="202"/>
    </location>
</feature>
<keyword id="KW-0472">Membrane</keyword>
<keyword id="KW-0496">Mitochondrion</keyword>
<keyword id="KW-0999">Mitochondrion inner membrane</keyword>
<keyword id="KW-1185">Reference proteome</keyword>
<keyword id="KW-0812">Transmembrane</keyword>
<keyword id="KW-1133">Transmembrane helix</keyword>
<sequence length="202" mass="21992">MAAPGRRWSVLLFRALQSLSARRALHDTAPPRDVLLFEHERGRFFAVLGLFCAGQGVFWASLAIASLARPPTPVRPTDAKTPDHGGLDLRSTLWRYGLAVGCGAIGSLVLGAGLLFSLRSVRSVMLRAGGKQVTLTTHAPFGWGAHFTVPLNQVSCMAHRGEVPAMLPLKVKGRRFYFLLDKAGHFPNTKLFDNTVGAYRSL</sequence>
<protein>
    <recommendedName>
        <fullName evidence="3">Transmembrane protein 223</fullName>
    </recommendedName>
</protein>
<organism>
    <name type="scientific">Bos taurus</name>
    <name type="common">Bovine</name>
    <dbReference type="NCBI Taxonomy" id="9913"/>
    <lineage>
        <taxon>Eukaryota</taxon>
        <taxon>Metazoa</taxon>
        <taxon>Chordata</taxon>
        <taxon>Craniata</taxon>
        <taxon>Vertebrata</taxon>
        <taxon>Euteleostomi</taxon>
        <taxon>Mammalia</taxon>
        <taxon>Eutheria</taxon>
        <taxon>Laurasiatheria</taxon>
        <taxon>Artiodactyla</taxon>
        <taxon>Ruminantia</taxon>
        <taxon>Pecora</taxon>
        <taxon>Bovidae</taxon>
        <taxon>Bovinae</taxon>
        <taxon>Bos</taxon>
    </lineage>
</organism>
<dbReference type="EMBL" id="BC142261">
    <property type="protein sequence ID" value="AAI42262.1"/>
    <property type="molecule type" value="mRNA"/>
</dbReference>
<dbReference type="RefSeq" id="NP_001093191.1">
    <property type="nucleotide sequence ID" value="NM_001099721.2"/>
</dbReference>
<dbReference type="FunCoup" id="A5PJW2">
    <property type="interactions" value="342"/>
</dbReference>
<dbReference type="STRING" id="9913.ENSBTAP00000012485"/>
<dbReference type="PaxDb" id="9913-ENSBTAP00000012485"/>
<dbReference type="GeneID" id="616632"/>
<dbReference type="KEGG" id="bta:616632"/>
<dbReference type="CTD" id="79064"/>
<dbReference type="eggNOG" id="ENOG502S0RN">
    <property type="taxonomic scope" value="Eukaryota"/>
</dbReference>
<dbReference type="InParanoid" id="A5PJW2"/>
<dbReference type="OrthoDB" id="5950063at2759"/>
<dbReference type="Proteomes" id="UP000009136">
    <property type="component" value="Unplaced"/>
</dbReference>
<dbReference type="GO" id="GO:0005743">
    <property type="term" value="C:mitochondrial inner membrane"/>
    <property type="evidence" value="ECO:0000250"/>
    <property type="project" value="UniProtKB"/>
</dbReference>
<dbReference type="GO" id="GO:0005739">
    <property type="term" value="C:mitochondrion"/>
    <property type="evidence" value="ECO:0000250"/>
    <property type="project" value="UniProtKB"/>
</dbReference>
<dbReference type="GO" id="GO:0097177">
    <property type="term" value="F:mitochondrial ribosome binding"/>
    <property type="evidence" value="ECO:0000250"/>
    <property type="project" value="UniProtKB"/>
</dbReference>
<dbReference type="GO" id="GO:0033617">
    <property type="term" value="P:mitochondrial cytochrome c oxidase assembly"/>
    <property type="evidence" value="ECO:0000250"/>
    <property type="project" value="UniProtKB"/>
</dbReference>
<dbReference type="InterPro" id="IPR026100">
    <property type="entry name" value="Tmem223"/>
</dbReference>
<dbReference type="InterPro" id="IPR045325">
    <property type="entry name" value="TMEM70/TMEM186/TMEM223"/>
</dbReference>
<dbReference type="PANTHER" id="PTHR14549">
    <property type="entry name" value="TRANSMEMBRANE PROTEIN 223"/>
    <property type="match status" value="1"/>
</dbReference>
<dbReference type="PANTHER" id="PTHR14549:SF2">
    <property type="entry name" value="TRANSMEMBRANE PROTEIN 223"/>
    <property type="match status" value="1"/>
</dbReference>
<dbReference type="Pfam" id="PF06979">
    <property type="entry name" value="TMEM70"/>
    <property type="match status" value="1"/>
</dbReference>
<gene>
    <name evidence="1" type="primary">TMEM223</name>
</gene>
<accession>A5PJW2</accession>
<proteinExistence type="evidence at transcript level"/>
<name>TM223_BOVIN</name>
<comment type="function">
    <text evidence="1">Mitochondrial ribosome-associated protein involved in the first steps of cytochrome c oxidase complex (complex IV) biogenesis. Stimulates the translation of MT-CO1 mRNA and is a constituent of early MT-CO1 assembly intermediates.</text>
</comment>
<comment type="subunit">
    <text evidence="1">Associates with the mitochondrial ribosome.</text>
</comment>
<comment type="subcellular location">
    <subcellularLocation>
        <location evidence="1">Mitochondrion inner membrane</location>
        <topology evidence="2">Multi-pass membrane protein</topology>
    </subcellularLocation>
</comment>
<comment type="similarity">
    <text evidence="3">Belongs to the TMEM223 family.</text>
</comment>
<evidence type="ECO:0000250" key="1">
    <source>
        <dbReference type="UniProtKB" id="A0PJW6"/>
    </source>
</evidence>
<evidence type="ECO:0000255" key="2"/>
<evidence type="ECO:0000305" key="3"/>
<reference key="1">
    <citation type="submission" date="2007-06" db="EMBL/GenBank/DDBJ databases">
        <authorList>
            <consortium name="NIH - Mammalian Gene Collection (MGC) project"/>
        </authorList>
    </citation>
    <scope>NUCLEOTIDE SEQUENCE [LARGE SCALE MRNA]</scope>
    <source>
        <strain>Hereford</strain>
        <tissue>Fetal brain</tissue>
    </source>
</reference>